<protein>
    <recommendedName>
        <fullName evidence="1">Methionine--tRNA ligase</fullName>
        <ecNumber evidence="1">6.1.1.10</ecNumber>
    </recommendedName>
    <alternativeName>
        <fullName evidence="1">Methionyl-tRNA synthetase</fullName>
        <shortName evidence="1">MetRS</shortName>
    </alternativeName>
</protein>
<name>SYM_SHEAM</name>
<keyword id="KW-0030">Aminoacyl-tRNA synthetase</keyword>
<keyword id="KW-0067">ATP-binding</keyword>
<keyword id="KW-0963">Cytoplasm</keyword>
<keyword id="KW-0436">Ligase</keyword>
<keyword id="KW-0479">Metal-binding</keyword>
<keyword id="KW-0547">Nucleotide-binding</keyword>
<keyword id="KW-0648">Protein biosynthesis</keyword>
<keyword id="KW-1185">Reference proteome</keyword>
<keyword id="KW-0694">RNA-binding</keyword>
<keyword id="KW-0820">tRNA-binding</keyword>
<keyword id="KW-0862">Zinc</keyword>
<gene>
    <name evidence="1" type="primary">metG</name>
    <name type="ordered locus">Sama_2049</name>
</gene>
<sequence>MANSQRKILVTSALPYANGPIHLGHMLEYIQTDIWSRFQKLRGHECHYICADDAHGTPIMLKAQQLGMAPEEMIAQVNVEHQQDFADFNVAFDNYHSTHSDENRALASEIYLKLRDGGYIKSKTISQLFDPEKSMFLPDRFVKGTCPKCKSEDQYGDNCDACGATYSPTELINPRSAVSGATPVMKETEHFFFDLPAFEGMLKAWTRSGALQSEMANKLDEWFEQGLQQWDITRDAPYFGFEIPDAPGKYFYVWLDAPIGYMGSFKNFCDKRGDINFDEFWAKDSSAEVYHFIGKDIVYFHSLFWPAMLHGAGFRQPSSVYAHGYVTVNGAKMSKSKGTFIKARTYLDHLDPEYLRYYYAAKLSARIDDLDLNLEDFAQRVNSDLVGKLVNLASRTAGFITKRFDGKLAAVADKSLIDSFLAKQDVIAELYEAREYGKAMREIMALADVANGFVADAAPWQLVKQDDKQEEAHQVCSNALNLFRILVTYLKPVLPRLAKDVEDFFRMELTWDGLDSDLSGHEIAPFKPMMQRVELDKVAAMVEASKENLQATAEPVKTGPLADDPISETISYEDFAKIDLRVALIQKAEAVPEADKLLKLQLDIGGEVRQVFAGIKSAYNPEDLEGKLTVMVANLAPRKMRFGMSEGMVLAAGPGGKDLFVLEPHAGAKPGMRVK</sequence>
<feature type="chain" id="PRO_0000331902" description="Methionine--tRNA ligase">
    <location>
        <begin position="1"/>
        <end position="675"/>
    </location>
</feature>
<feature type="domain" description="tRNA-binding" evidence="1">
    <location>
        <begin position="574"/>
        <end position="675"/>
    </location>
</feature>
<feature type="short sequence motif" description="'HIGH' region">
    <location>
        <begin position="15"/>
        <end position="25"/>
    </location>
</feature>
<feature type="short sequence motif" description="'KMSKS' region">
    <location>
        <begin position="332"/>
        <end position="336"/>
    </location>
</feature>
<feature type="binding site" evidence="1">
    <location>
        <position position="146"/>
    </location>
    <ligand>
        <name>Zn(2+)</name>
        <dbReference type="ChEBI" id="CHEBI:29105"/>
    </ligand>
</feature>
<feature type="binding site" evidence="1">
    <location>
        <position position="149"/>
    </location>
    <ligand>
        <name>Zn(2+)</name>
        <dbReference type="ChEBI" id="CHEBI:29105"/>
    </ligand>
</feature>
<feature type="binding site" evidence="1">
    <location>
        <position position="159"/>
    </location>
    <ligand>
        <name>Zn(2+)</name>
        <dbReference type="ChEBI" id="CHEBI:29105"/>
    </ligand>
</feature>
<feature type="binding site" evidence="1">
    <location>
        <position position="162"/>
    </location>
    <ligand>
        <name>Zn(2+)</name>
        <dbReference type="ChEBI" id="CHEBI:29105"/>
    </ligand>
</feature>
<feature type="binding site" evidence="1">
    <location>
        <position position="335"/>
    </location>
    <ligand>
        <name>ATP</name>
        <dbReference type="ChEBI" id="CHEBI:30616"/>
    </ligand>
</feature>
<organism>
    <name type="scientific">Shewanella amazonensis (strain ATCC BAA-1098 / SB2B)</name>
    <dbReference type="NCBI Taxonomy" id="326297"/>
    <lineage>
        <taxon>Bacteria</taxon>
        <taxon>Pseudomonadati</taxon>
        <taxon>Pseudomonadota</taxon>
        <taxon>Gammaproteobacteria</taxon>
        <taxon>Alteromonadales</taxon>
        <taxon>Shewanellaceae</taxon>
        <taxon>Shewanella</taxon>
    </lineage>
</organism>
<accession>A1S798</accession>
<comment type="function">
    <text evidence="1">Is required not only for elongation of protein synthesis but also for the initiation of all mRNA translation through initiator tRNA(fMet) aminoacylation.</text>
</comment>
<comment type="catalytic activity">
    <reaction evidence="1">
        <text>tRNA(Met) + L-methionine + ATP = L-methionyl-tRNA(Met) + AMP + diphosphate</text>
        <dbReference type="Rhea" id="RHEA:13481"/>
        <dbReference type="Rhea" id="RHEA-COMP:9667"/>
        <dbReference type="Rhea" id="RHEA-COMP:9698"/>
        <dbReference type="ChEBI" id="CHEBI:30616"/>
        <dbReference type="ChEBI" id="CHEBI:33019"/>
        <dbReference type="ChEBI" id="CHEBI:57844"/>
        <dbReference type="ChEBI" id="CHEBI:78442"/>
        <dbReference type="ChEBI" id="CHEBI:78530"/>
        <dbReference type="ChEBI" id="CHEBI:456215"/>
        <dbReference type="EC" id="6.1.1.10"/>
    </reaction>
</comment>
<comment type="cofactor">
    <cofactor evidence="1">
        <name>Zn(2+)</name>
        <dbReference type="ChEBI" id="CHEBI:29105"/>
    </cofactor>
    <text evidence="1">Binds 1 zinc ion per subunit.</text>
</comment>
<comment type="subunit">
    <text evidence="1">Homodimer.</text>
</comment>
<comment type="subcellular location">
    <subcellularLocation>
        <location evidence="1">Cytoplasm</location>
    </subcellularLocation>
</comment>
<comment type="similarity">
    <text evidence="1">Belongs to the class-I aminoacyl-tRNA synthetase family. MetG type 1 subfamily.</text>
</comment>
<dbReference type="EC" id="6.1.1.10" evidence="1"/>
<dbReference type="EMBL" id="CP000507">
    <property type="protein sequence ID" value="ABM00255.1"/>
    <property type="molecule type" value="Genomic_DNA"/>
</dbReference>
<dbReference type="RefSeq" id="WP_011760162.1">
    <property type="nucleotide sequence ID" value="NC_008700.1"/>
</dbReference>
<dbReference type="SMR" id="A1S798"/>
<dbReference type="STRING" id="326297.Sama_2049"/>
<dbReference type="KEGG" id="saz:Sama_2049"/>
<dbReference type="eggNOG" id="COG0073">
    <property type="taxonomic scope" value="Bacteria"/>
</dbReference>
<dbReference type="eggNOG" id="COG0143">
    <property type="taxonomic scope" value="Bacteria"/>
</dbReference>
<dbReference type="HOGENOM" id="CLU_009710_7_0_6"/>
<dbReference type="OrthoDB" id="9810191at2"/>
<dbReference type="Proteomes" id="UP000009175">
    <property type="component" value="Chromosome"/>
</dbReference>
<dbReference type="GO" id="GO:0005829">
    <property type="term" value="C:cytosol"/>
    <property type="evidence" value="ECO:0007669"/>
    <property type="project" value="TreeGrafter"/>
</dbReference>
<dbReference type="GO" id="GO:0005524">
    <property type="term" value="F:ATP binding"/>
    <property type="evidence" value="ECO:0007669"/>
    <property type="project" value="UniProtKB-UniRule"/>
</dbReference>
<dbReference type="GO" id="GO:0046872">
    <property type="term" value="F:metal ion binding"/>
    <property type="evidence" value="ECO:0007669"/>
    <property type="project" value="UniProtKB-KW"/>
</dbReference>
<dbReference type="GO" id="GO:0004825">
    <property type="term" value="F:methionine-tRNA ligase activity"/>
    <property type="evidence" value="ECO:0007669"/>
    <property type="project" value="UniProtKB-UniRule"/>
</dbReference>
<dbReference type="GO" id="GO:0000049">
    <property type="term" value="F:tRNA binding"/>
    <property type="evidence" value="ECO:0007669"/>
    <property type="project" value="UniProtKB-KW"/>
</dbReference>
<dbReference type="GO" id="GO:0006431">
    <property type="term" value="P:methionyl-tRNA aminoacylation"/>
    <property type="evidence" value="ECO:0007669"/>
    <property type="project" value="UniProtKB-UniRule"/>
</dbReference>
<dbReference type="CDD" id="cd07957">
    <property type="entry name" value="Anticodon_Ia_Met"/>
    <property type="match status" value="1"/>
</dbReference>
<dbReference type="CDD" id="cd00814">
    <property type="entry name" value="MetRS_core"/>
    <property type="match status" value="1"/>
</dbReference>
<dbReference type="CDD" id="cd02800">
    <property type="entry name" value="tRNA_bind_EcMetRS_like"/>
    <property type="match status" value="1"/>
</dbReference>
<dbReference type="FunFam" id="1.10.730.10:FF:000005">
    <property type="entry name" value="Methionine--tRNA ligase"/>
    <property type="match status" value="1"/>
</dbReference>
<dbReference type="FunFam" id="2.20.28.20:FF:000001">
    <property type="entry name" value="Methionine--tRNA ligase"/>
    <property type="match status" value="1"/>
</dbReference>
<dbReference type="FunFam" id="2.40.50.140:FF:000042">
    <property type="entry name" value="Methionine--tRNA ligase"/>
    <property type="match status" value="1"/>
</dbReference>
<dbReference type="Gene3D" id="3.40.50.620">
    <property type="entry name" value="HUPs"/>
    <property type="match status" value="1"/>
</dbReference>
<dbReference type="Gene3D" id="1.10.730.10">
    <property type="entry name" value="Isoleucyl-tRNA Synthetase, Domain 1"/>
    <property type="match status" value="1"/>
</dbReference>
<dbReference type="Gene3D" id="2.20.28.20">
    <property type="entry name" value="Methionyl-tRNA synthetase, Zn-domain"/>
    <property type="match status" value="1"/>
</dbReference>
<dbReference type="Gene3D" id="2.40.50.140">
    <property type="entry name" value="Nucleic acid-binding proteins"/>
    <property type="match status" value="1"/>
</dbReference>
<dbReference type="HAMAP" id="MF_00098">
    <property type="entry name" value="Met_tRNA_synth_type1"/>
    <property type="match status" value="1"/>
</dbReference>
<dbReference type="InterPro" id="IPR001412">
    <property type="entry name" value="aa-tRNA-synth_I_CS"/>
</dbReference>
<dbReference type="InterPro" id="IPR041872">
    <property type="entry name" value="Anticodon_Met"/>
</dbReference>
<dbReference type="InterPro" id="IPR004495">
    <property type="entry name" value="Met-tRNA-synth_bsu_C"/>
</dbReference>
<dbReference type="InterPro" id="IPR023458">
    <property type="entry name" value="Met-tRNA_ligase_1"/>
</dbReference>
<dbReference type="InterPro" id="IPR014758">
    <property type="entry name" value="Met-tRNA_synth"/>
</dbReference>
<dbReference type="InterPro" id="IPR015413">
    <property type="entry name" value="Methionyl/Leucyl_tRNA_Synth"/>
</dbReference>
<dbReference type="InterPro" id="IPR033911">
    <property type="entry name" value="MetRS_core"/>
</dbReference>
<dbReference type="InterPro" id="IPR029038">
    <property type="entry name" value="MetRS_Zn"/>
</dbReference>
<dbReference type="InterPro" id="IPR012340">
    <property type="entry name" value="NA-bd_OB-fold"/>
</dbReference>
<dbReference type="InterPro" id="IPR014729">
    <property type="entry name" value="Rossmann-like_a/b/a_fold"/>
</dbReference>
<dbReference type="InterPro" id="IPR002547">
    <property type="entry name" value="tRNA-bd_dom"/>
</dbReference>
<dbReference type="InterPro" id="IPR009080">
    <property type="entry name" value="tRNAsynth_Ia_anticodon-bd"/>
</dbReference>
<dbReference type="NCBIfam" id="TIGR00398">
    <property type="entry name" value="metG"/>
    <property type="match status" value="1"/>
</dbReference>
<dbReference type="NCBIfam" id="TIGR00399">
    <property type="entry name" value="metG_C_term"/>
    <property type="match status" value="1"/>
</dbReference>
<dbReference type="NCBIfam" id="NF001100">
    <property type="entry name" value="PRK00133.1"/>
    <property type="match status" value="1"/>
</dbReference>
<dbReference type="PANTHER" id="PTHR45765">
    <property type="entry name" value="METHIONINE--TRNA LIGASE"/>
    <property type="match status" value="1"/>
</dbReference>
<dbReference type="PANTHER" id="PTHR45765:SF1">
    <property type="entry name" value="METHIONINE--TRNA LIGASE, CYTOPLASMIC"/>
    <property type="match status" value="1"/>
</dbReference>
<dbReference type="Pfam" id="PF19303">
    <property type="entry name" value="Anticodon_3"/>
    <property type="match status" value="1"/>
</dbReference>
<dbReference type="Pfam" id="PF09334">
    <property type="entry name" value="tRNA-synt_1g"/>
    <property type="match status" value="1"/>
</dbReference>
<dbReference type="Pfam" id="PF01588">
    <property type="entry name" value="tRNA_bind"/>
    <property type="match status" value="1"/>
</dbReference>
<dbReference type="PRINTS" id="PR01041">
    <property type="entry name" value="TRNASYNTHMET"/>
</dbReference>
<dbReference type="SUPFAM" id="SSF47323">
    <property type="entry name" value="Anticodon-binding domain of a subclass of class I aminoacyl-tRNA synthetases"/>
    <property type="match status" value="1"/>
</dbReference>
<dbReference type="SUPFAM" id="SSF57770">
    <property type="entry name" value="Methionyl-tRNA synthetase (MetRS), Zn-domain"/>
    <property type="match status" value="1"/>
</dbReference>
<dbReference type="SUPFAM" id="SSF50249">
    <property type="entry name" value="Nucleic acid-binding proteins"/>
    <property type="match status" value="1"/>
</dbReference>
<dbReference type="SUPFAM" id="SSF52374">
    <property type="entry name" value="Nucleotidylyl transferase"/>
    <property type="match status" value="1"/>
</dbReference>
<dbReference type="PROSITE" id="PS00178">
    <property type="entry name" value="AA_TRNA_LIGASE_I"/>
    <property type="match status" value="1"/>
</dbReference>
<dbReference type="PROSITE" id="PS50886">
    <property type="entry name" value="TRBD"/>
    <property type="match status" value="1"/>
</dbReference>
<proteinExistence type="inferred from homology"/>
<reference key="1">
    <citation type="submission" date="2006-12" db="EMBL/GenBank/DDBJ databases">
        <title>Complete sequence of Shewanella amazonensis SB2B.</title>
        <authorList>
            <consortium name="US DOE Joint Genome Institute"/>
            <person name="Copeland A."/>
            <person name="Lucas S."/>
            <person name="Lapidus A."/>
            <person name="Barry K."/>
            <person name="Detter J.C."/>
            <person name="Glavina del Rio T."/>
            <person name="Hammon N."/>
            <person name="Israni S."/>
            <person name="Dalin E."/>
            <person name="Tice H."/>
            <person name="Pitluck S."/>
            <person name="Munk A.C."/>
            <person name="Brettin T."/>
            <person name="Bruce D."/>
            <person name="Han C."/>
            <person name="Tapia R."/>
            <person name="Gilna P."/>
            <person name="Schmutz J."/>
            <person name="Larimer F."/>
            <person name="Land M."/>
            <person name="Hauser L."/>
            <person name="Kyrpides N."/>
            <person name="Mikhailova N."/>
            <person name="Fredrickson J."/>
            <person name="Richardson P."/>
        </authorList>
    </citation>
    <scope>NUCLEOTIDE SEQUENCE [LARGE SCALE GENOMIC DNA]</scope>
    <source>
        <strain>ATCC BAA-1098 / SB2B</strain>
    </source>
</reference>
<evidence type="ECO:0000255" key="1">
    <source>
        <dbReference type="HAMAP-Rule" id="MF_00098"/>
    </source>
</evidence>